<reference key="1">
    <citation type="journal article" date="1996" name="Microbiology">
        <title>Characterization of the gene for an immunodominant 72 kDa lipoprotein of Mycoplasma mycoides subsp. mycoides small colony type.</title>
        <authorList>
            <person name="Cheng X."/>
            <person name="Nicolet J."/>
            <person name="Miserez R."/>
            <person name="Kuhnert P."/>
            <person name="Krampe M."/>
            <person name="Pilloud T."/>
            <person name="Abdo E.-M."/>
            <person name="Griot C."/>
            <person name="Frey J."/>
        </authorList>
    </citation>
    <scope>NUCLEOTIDE SEQUENCE [GENOMIC DNA]</scope>
    <source>
        <strain>L2</strain>
    </source>
</reference>
<reference key="2">
    <citation type="journal article" date="2004" name="Genome Res.">
        <title>The genome sequence of Mycoplasma mycoides subsp. mycoides SC type strain PG1T, the causative agent of contagious bovine pleuropneumonia (CBPP).</title>
        <authorList>
            <person name="Westberg J."/>
            <person name="Persson A."/>
            <person name="Holmberg A."/>
            <person name="Goesmann A."/>
            <person name="Lundeberg J."/>
            <person name="Johansson K.-E."/>
            <person name="Pettersson B."/>
            <person name="Uhlen M."/>
        </authorList>
    </citation>
    <scope>NUCLEOTIDE SEQUENCE [LARGE SCALE GENOMIC DNA]</scope>
    <source>
        <strain>CCUG 32753 / NCTC 10114 / PG1</strain>
    </source>
</reference>
<evidence type="ECO:0000255" key="1">
    <source>
        <dbReference type="PROSITE-ProRule" id="PRU00303"/>
    </source>
</evidence>
<evidence type="ECO:0000256" key="2">
    <source>
        <dbReference type="SAM" id="MobiDB-lite"/>
    </source>
</evidence>
<evidence type="ECO:0000305" key="3"/>
<gene>
    <name type="primary">p72</name>
    <name type="ordered locus">MSC_0014</name>
</gene>
<protein>
    <recommendedName>
        <fullName>Immunodominant protein p72</fullName>
    </recommendedName>
</protein>
<proteinExistence type="inferred from homology"/>
<name>P72_MYCMS</name>
<comment type="function">
    <text>May play a role in virulence.</text>
</comment>
<comment type="subcellular location">
    <subcellularLocation>
        <location evidence="3">Cell membrane</location>
        <topology evidence="3">Lipid-anchor</topology>
    </subcellularLocation>
</comment>
<comment type="similarity">
    <text evidence="3">Belongs to the mycoplasma p72 lipoprotein family.</text>
</comment>
<accession>P55801</accession>
<dbReference type="EMBL" id="U61140">
    <property type="protein sequence ID" value="AAC44571.1"/>
    <property type="molecule type" value="Genomic_DNA"/>
</dbReference>
<dbReference type="EMBL" id="U53210">
    <property type="protein sequence ID" value="AAC44569.1"/>
    <property type="molecule type" value="Genomic_DNA"/>
</dbReference>
<dbReference type="EMBL" id="BX293980">
    <property type="protein sequence ID" value="CAE76667.1"/>
    <property type="molecule type" value="Genomic_DNA"/>
</dbReference>
<dbReference type="RefSeq" id="NP_975025.1">
    <property type="nucleotide sequence ID" value="NC_005364.2"/>
</dbReference>
<dbReference type="RefSeq" id="WP_011166225.1">
    <property type="nucleotide sequence ID" value="NC_005364.2"/>
</dbReference>
<dbReference type="STRING" id="272632.MSC_0014"/>
<dbReference type="KEGG" id="mmy:MSC_0014"/>
<dbReference type="PATRIC" id="fig|272632.4.peg.14"/>
<dbReference type="eggNOG" id="ENOG5031YVH">
    <property type="taxonomic scope" value="Bacteria"/>
</dbReference>
<dbReference type="HOGENOM" id="CLU_030565_0_0_14"/>
<dbReference type="Proteomes" id="UP000001016">
    <property type="component" value="Chromosome"/>
</dbReference>
<dbReference type="GO" id="GO:0005886">
    <property type="term" value="C:plasma membrane"/>
    <property type="evidence" value="ECO:0007669"/>
    <property type="project" value="UniProtKB-SubCell"/>
</dbReference>
<dbReference type="InterPro" id="IPR019992">
    <property type="entry name" value="Mycoides_lipoprot_LppA/p72"/>
</dbReference>
<dbReference type="NCBIfam" id="NF045959">
    <property type="entry name" value="LppA_rel_LP"/>
    <property type="match status" value="1"/>
</dbReference>
<dbReference type="NCBIfam" id="TIGR03490">
    <property type="entry name" value="Mycoplas_LppA"/>
    <property type="match status" value="1"/>
</dbReference>
<dbReference type="PROSITE" id="PS51257">
    <property type="entry name" value="PROKAR_LIPOPROTEIN"/>
    <property type="match status" value="1"/>
</dbReference>
<keyword id="KW-1003">Cell membrane</keyword>
<keyword id="KW-0449">Lipoprotein</keyword>
<keyword id="KW-0472">Membrane</keyword>
<keyword id="KW-0564">Palmitate</keyword>
<keyword id="KW-1185">Reference proteome</keyword>
<keyword id="KW-0732">Signal</keyword>
<keyword id="KW-0843">Virulence</keyword>
<organism>
    <name type="scientific">Mycoplasma mycoides subsp. mycoides SC (strain CCUG 32753 / NCTC 10114 / PG1)</name>
    <dbReference type="NCBI Taxonomy" id="272632"/>
    <lineage>
        <taxon>Bacteria</taxon>
        <taxon>Bacillati</taxon>
        <taxon>Mycoplasmatota</taxon>
        <taxon>Mollicutes</taxon>
        <taxon>Mycoplasmataceae</taxon>
        <taxon>Mycoplasma</taxon>
    </lineage>
</organism>
<sequence>MKKATKLLLSILPISSISFLSVVSCSTRNSNAKQPDKKPEKPNENTPKTPSKPDESKQPDNNNTNPGDSNNGSNNPEIKPDPSENPQSDQPMDKPDEKIDKPSHSDKPQADDSNNNRDIFSDLDKISKEISFETFSFYTQRDAVTALVDLQKDPSTIYTIFSKDYKTIFDKYHIQFLANNEESANNEKGLIEKVKLKFTHKKFDQSKILDFIFTGFKKNEYTSITNNKEKYITKREKVEKITDLFPSLIGYVLLYSQDHNQYKNLMEAKNVINFEDLENGNSSLFIDKAPLLNVATIKDYLFEFNPELGKLYKEKITAVKYDDYNGILGVKLEIENRDFDPKTTKEPIIEKEFVFDNFRKVNIKDNEKNPLSLFLTQDKFKEMTKSGLLKTKIQELRSSNKLEKKELLQDKKIDFLKQQIFKNLLVDINDNSHNIYRSQSTLSLGSNKTYKSILGLAGGFSIYPFHTSINKDSIKNIYLSINKDEENVHKAIIEFEVYIPVFSTGFSDLKSYATSGDEKYLVLKIVQTTSIQ</sequence>
<feature type="signal peptide" evidence="1">
    <location>
        <begin position="1"/>
        <end position="24"/>
    </location>
</feature>
<feature type="chain" id="PRO_0000018099" description="Immunodominant protein p72">
    <location>
        <begin position="25"/>
        <end position="532"/>
    </location>
</feature>
<feature type="region of interest" description="Disordered" evidence="2">
    <location>
        <begin position="26"/>
        <end position="119"/>
    </location>
</feature>
<feature type="compositionally biased region" description="Basic and acidic residues" evidence="2">
    <location>
        <begin position="34"/>
        <end position="43"/>
    </location>
</feature>
<feature type="compositionally biased region" description="Low complexity" evidence="2">
    <location>
        <begin position="59"/>
        <end position="75"/>
    </location>
</feature>
<feature type="compositionally biased region" description="Basic and acidic residues" evidence="2">
    <location>
        <begin position="91"/>
        <end position="110"/>
    </location>
</feature>
<feature type="lipid moiety-binding region" description="N-palmitoyl cysteine" evidence="3">
    <location>
        <position position="25"/>
    </location>
</feature>
<feature type="lipid moiety-binding region" description="S-diacylglycerol cysteine" evidence="3">
    <location>
        <position position="25"/>
    </location>
</feature>
<feature type="sequence conflict" description="In Ref. 1; AAC44571/AAC44569." evidence="3" ref="1">
    <original>S</original>
    <variation>L</variation>
    <location>
        <position position="473"/>
    </location>
</feature>